<gene>
    <name type="primary">MND1</name>
    <name type="ordered locus">At4g29170</name>
    <name type="ORF">F19B15.200</name>
</gene>
<keyword id="KW-0025">Alternative splicing</keyword>
<keyword id="KW-0175">Coiled coil</keyword>
<keyword id="KW-0233">DNA recombination</keyword>
<keyword id="KW-0469">Meiosis</keyword>
<keyword id="KW-0539">Nucleus</keyword>
<keyword id="KW-1185">Reference proteome</keyword>
<proteinExistence type="evidence at protein level"/>
<name>MND1_ARATH</name>
<evidence type="ECO:0000255" key="1"/>
<evidence type="ECO:0000269" key="2">
    <source>
    </source>
</evidence>
<evidence type="ECO:0000269" key="3">
    <source>
    </source>
</evidence>
<evidence type="ECO:0000269" key="4">
    <source>
    </source>
</evidence>
<evidence type="ECO:0000269" key="5">
    <source>
    </source>
</evidence>
<evidence type="ECO:0000305" key="6"/>
<feature type="chain" id="PRO_0000377432" description="Meiotic nuclear division protein 1 homolog">
    <location>
        <begin position="1"/>
        <end position="230"/>
    </location>
</feature>
<feature type="coiled-coil region" evidence="1">
    <location>
        <begin position="79"/>
        <end position="146"/>
    </location>
</feature>
<feature type="splice variant" id="VSP_037490" description="In isoform 2." evidence="6">
    <location>
        <begin position="1"/>
        <end position="15"/>
    </location>
</feature>
<dbReference type="EMBL" id="AM162278">
    <property type="protein sequence ID" value="CAJ44238.1"/>
    <property type="molecule type" value="mRNA"/>
</dbReference>
<dbReference type="EMBL" id="DQ248000">
    <property type="protein sequence ID" value="ABB73190.1"/>
    <property type="molecule type" value="mRNA"/>
</dbReference>
<dbReference type="EMBL" id="AL078470">
    <property type="protein sequence ID" value="CAB43931.1"/>
    <property type="status" value="ALT_SEQ"/>
    <property type="molecule type" value="Genomic_DNA"/>
</dbReference>
<dbReference type="EMBL" id="AL161574">
    <property type="protein sequence ID" value="CAB79675.1"/>
    <property type="status" value="ALT_SEQ"/>
    <property type="molecule type" value="Genomic_DNA"/>
</dbReference>
<dbReference type="EMBL" id="CP002687">
    <property type="protein sequence ID" value="AEE85596.1"/>
    <property type="molecule type" value="Genomic_DNA"/>
</dbReference>
<dbReference type="EMBL" id="CP002687">
    <property type="protein sequence ID" value="AEE85597.1"/>
    <property type="molecule type" value="Genomic_DNA"/>
</dbReference>
<dbReference type="EMBL" id="AK117713">
    <property type="protein sequence ID" value="BAC42364.1"/>
    <property type="molecule type" value="mRNA"/>
</dbReference>
<dbReference type="EMBL" id="BT005435">
    <property type="protein sequence ID" value="AAO63855.1"/>
    <property type="molecule type" value="mRNA"/>
</dbReference>
<dbReference type="PIR" id="T08972">
    <property type="entry name" value="T08972"/>
</dbReference>
<dbReference type="RefSeq" id="NP_001078469.1">
    <molecule id="Q8GYD2-2"/>
    <property type="nucleotide sequence ID" value="NM_001085000.2"/>
</dbReference>
<dbReference type="RefSeq" id="NP_194646.2">
    <molecule id="Q8GYD2-1"/>
    <property type="nucleotide sequence ID" value="NM_119061.4"/>
</dbReference>
<dbReference type="SMR" id="Q8GYD2"/>
<dbReference type="BioGRID" id="14325">
    <property type="interactions" value="9"/>
</dbReference>
<dbReference type="FunCoup" id="Q8GYD2">
    <property type="interactions" value="1013"/>
</dbReference>
<dbReference type="IntAct" id="Q8GYD2">
    <property type="interactions" value="6"/>
</dbReference>
<dbReference type="STRING" id="3702.Q8GYD2"/>
<dbReference type="iPTMnet" id="Q8GYD2"/>
<dbReference type="PaxDb" id="3702-AT4G29170.1"/>
<dbReference type="ProteomicsDB" id="238293">
    <molecule id="Q8GYD2-1"/>
</dbReference>
<dbReference type="EnsemblPlants" id="AT4G29170.1">
    <molecule id="Q8GYD2-1"/>
    <property type="protein sequence ID" value="AT4G29170.1"/>
    <property type="gene ID" value="AT4G29170"/>
</dbReference>
<dbReference type="EnsemblPlants" id="AT4G29170.2">
    <molecule id="Q8GYD2-2"/>
    <property type="protein sequence ID" value="AT4G29170.2"/>
    <property type="gene ID" value="AT4G29170"/>
</dbReference>
<dbReference type="GeneID" id="829038"/>
<dbReference type="Gramene" id="AT4G29170.1">
    <molecule id="Q8GYD2-1"/>
    <property type="protein sequence ID" value="AT4G29170.1"/>
    <property type="gene ID" value="AT4G29170"/>
</dbReference>
<dbReference type="Gramene" id="AT4G29170.2">
    <molecule id="Q8GYD2-2"/>
    <property type="protein sequence ID" value="AT4G29170.2"/>
    <property type="gene ID" value="AT4G29170"/>
</dbReference>
<dbReference type="KEGG" id="ath:AT4G29170"/>
<dbReference type="Araport" id="AT4G29170"/>
<dbReference type="TAIR" id="AT4G29170">
    <property type="gene designation" value="ATMND1"/>
</dbReference>
<dbReference type="eggNOG" id="KOG3433">
    <property type="taxonomic scope" value="Eukaryota"/>
</dbReference>
<dbReference type="HOGENOM" id="CLU_080628_3_0_1"/>
<dbReference type="InParanoid" id="Q8GYD2"/>
<dbReference type="OMA" id="VCYWAFP"/>
<dbReference type="PhylomeDB" id="Q8GYD2"/>
<dbReference type="PRO" id="PR:Q8GYD2"/>
<dbReference type="Proteomes" id="UP000006548">
    <property type="component" value="Chromosome 4"/>
</dbReference>
<dbReference type="ExpressionAtlas" id="Q8GYD2">
    <property type="expression patterns" value="baseline and differential"/>
</dbReference>
<dbReference type="GO" id="GO:0005730">
    <property type="term" value="C:nucleolus"/>
    <property type="evidence" value="ECO:0007669"/>
    <property type="project" value="UniProtKB-SubCell"/>
</dbReference>
<dbReference type="GO" id="GO:0003690">
    <property type="term" value="F:double-stranded DNA binding"/>
    <property type="evidence" value="ECO:0007669"/>
    <property type="project" value="InterPro"/>
</dbReference>
<dbReference type="GO" id="GO:0006302">
    <property type="term" value="P:double-strand break repair"/>
    <property type="evidence" value="ECO:0000315"/>
    <property type="project" value="TAIR"/>
</dbReference>
<dbReference type="GO" id="GO:0009553">
    <property type="term" value="P:embryo sac development"/>
    <property type="evidence" value="ECO:0000315"/>
    <property type="project" value="TAIR"/>
</dbReference>
<dbReference type="GO" id="GO:0009555">
    <property type="term" value="P:pollen development"/>
    <property type="evidence" value="ECO:0000315"/>
    <property type="project" value="TAIR"/>
</dbReference>
<dbReference type="GO" id="GO:0007131">
    <property type="term" value="P:reciprocal meiotic recombination"/>
    <property type="evidence" value="ECO:0007669"/>
    <property type="project" value="InterPro"/>
</dbReference>
<dbReference type="GO" id="GO:0010212">
    <property type="term" value="P:response to ionizing radiation"/>
    <property type="evidence" value="ECO:0000315"/>
    <property type="project" value="TAIR"/>
</dbReference>
<dbReference type="InterPro" id="IPR040661">
    <property type="entry name" value="LZ3wCH"/>
</dbReference>
<dbReference type="InterPro" id="IPR005647">
    <property type="entry name" value="Mnd1"/>
</dbReference>
<dbReference type="InterPro" id="IPR040453">
    <property type="entry name" value="Mnd1_HTH"/>
</dbReference>
<dbReference type="PANTHER" id="PTHR31398">
    <property type="entry name" value="MEIOTIC NUCLEAR DIVISION PROTEIN 1 HOMOLOG"/>
    <property type="match status" value="1"/>
</dbReference>
<dbReference type="PANTHER" id="PTHR31398:SF0">
    <property type="entry name" value="MEIOTIC NUCLEAR DIVISION PROTEIN 1 HOMOLOG"/>
    <property type="match status" value="1"/>
</dbReference>
<dbReference type="Pfam" id="PF18517">
    <property type="entry name" value="LZ3wCH"/>
    <property type="match status" value="1"/>
</dbReference>
<dbReference type="Pfam" id="PF03962">
    <property type="entry name" value="Mnd1"/>
    <property type="match status" value="1"/>
</dbReference>
<dbReference type="PIRSF" id="PIRSF026991">
    <property type="entry name" value="Mnd1"/>
    <property type="match status" value="1"/>
</dbReference>
<accession>Q8GYD2</accession>
<accession>A8MS27</accession>
<accession>Q9SZE5</accession>
<sequence length="230" mass="26403">MSKKRGLSLEEKREKMLQIFYESQDFFLLKELEKMGPKKGVISQSVKDVIQSLVDDDLVAKDKIGISIYFWSLPSCAGNQLRSVRQKLESDLQGSNKRLAELVDQCEALKKGREESEERTEALTQLKDIEKKHKDLKNEMVQFADNDPATLEAKRNAIEVAHQSANRWTDNIFTLRQWCSNNFPQAKEQLEHLYTEAGITEDFDYIELSSFPLSSSHEADTAKQLVQDEA</sequence>
<reference key="1">
    <citation type="journal article" date="2006" name="DNA Repair">
        <title>Atmnd1-delta1 is sensitive to gamma-irradiation and defective in meiotic DNA repair.</title>
        <authorList>
            <person name="Domenichini S."/>
            <person name="Raynaud C."/>
            <person name="Ni D.A."/>
            <person name="Henry Y."/>
            <person name="Bergounioux C."/>
        </authorList>
    </citation>
    <scope>NUCLEOTIDE SEQUENCE [MRNA] (ISOFORM 1)</scope>
</reference>
<reference key="2">
    <citation type="journal article" date="2006" name="J. Cell Sci.">
        <title>The Arabidopsis thaliana MND1 homologue plays a key role in meiotic homologous pairing, synapsis and recombination.</title>
        <authorList>
            <person name="Kerzendorfer C."/>
            <person name="Vignard J."/>
            <person name="Pedrosa-Harand A."/>
            <person name="Siwiec T."/>
            <person name="Akimcheva S."/>
            <person name="Jolivet S."/>
            <person name="Sablowski R."/>
            <person name="Armstrong S."/>
            <person name="Schweizer D."/>
            <person name="Mercier R."/>
            <person name="Schloegelhofer P."/>
        </authorList>
    </citation>
    <scope>NUCLEOTIDE SEQUENCE [MRNA] (ISOFORM 1)</scope>
    <scope>FUNCTION</scope>
    <scope>INTERACTION WITH HOP2</scope>
    <scope>DISRUPTION PHENOTYPE</scope>
</reference>
<reference key="3">
    <citation type="journal article" date="1999" name="Nature">
        <title>Sequence and analysis of chromosome 4 of the plant Arabidopsis thaliana.</title>
        <authorList>
            <person name="Mayer K.F.X."/>
            <person name="Schueller C."/>
            <person name="Wambutt R."/>
            <person name="Murphy G."/>
            <person name="Volckaert G."/>
            <person name="Pohl T."/>
            <person name="Duesterhoeft A."/>
            <person name="Stiekema W."/>
            <person name="Entian K.-D."/>
            <person name="Terryn N."/>
            <person name="Harris B."/>
            <person name="Ansorge W."/>
            <person name="Brandt P."/>
            <person name="Grivell L.A."/>
            <person name="Rieger M."/>
            <person name="Weichselgartner M."/>
            <person name="de Simone V."/>
            <person name="Obermaier B."/>
            <person name="Mache R."/>
            <person name="Mueller M."/>
            <person name="Kreis M."/>
            <person name="Delseny M."/>
            <person name="Puigdomenech P."/>
            <person name="Watson M."/>
            <person name="Schmidtheini T."/>
            <person name="Reichert B."/>
            <person name="Portetelle D."/>
            <person name="Perez-Alonso M."/>
            <person name="Boutry M."/>
            <person name="Bancroft I."/>
            <person name="Vos P."/>
            <person name="Hoheisel J."/>
            <person name="Zimmermann W."/>
            <person name="Wedler H."/>
            <person name="Ridley P."/>
            <person name="Langham S.-A."/>
            <person name="McCullagh B."/>
            <person name="Bilham L."/>
            <person name="Robben J."/>
            <person name="van der Schueren J."/>
            <person name="Grymonprez B."/>
            <person name="Chuang Y.-J."/>
            <person name="Vandenbussche F."/>
            <person name="Braeken M."/>
            <person name="Weltjens I."/>
            <person name="Voet M."/>
            <person name="Bastiaens I."/>
            <person name="Aert R."/>
            <person name="Defoor E."/>
            <person name="Weitzenegger T."/>
            <person name="Bothe G."/>
            <person name="Ramsperger U."/>
            <person name="Hilbert H."/>
            <person name="Braun M."/>
            <person name="Holzer E."/>
            <person name="Brandt A."/>
            <person name="Peters S."/>
            <person name="van Staveren M."/>
            <person name="Dirkse W."/>
            <person name="Mooijman P."/>
            <person name="Klein Lankhorst R."/>
            <person name="Rose M."/>
            <person name="Hauf J."/>
            <person name="Koetter P."/>
            <person name="Berneiser S."/>
            <person name="Hempel S."/>
            <person name="Feldpausch M."/>
            <person name="Lamberth S."/>
            <person name="Van den Daele H."/>
            <person name="De Keyser A."/>
            <person name="Buysshaert C."/>
            <person name="Gielen J."/>
            <person name="Villarroel R."/>
            <person name="De Clercq R."/>
            <person name="van Montagu M."/>
            <person name="Rogers J."/>
            <person name="Cronin A."/>
            <person name="Quail M.A."/>
            <person name="Bray-Allen S."/>
            <person name="Clark L."/>
            <person name="Doggett J."/>
            <person name="Hall S."/>
            <person name="Kay M."/>
            <person name="Lennard N."/>
            <person name="McLay K."/>
            <person name="Mayes R."/>
            <person name="Pettett A."/>
            <person name="Rajandream M.A."/>
            <person name="Lyne M."/>
            <person name="Benes V."/>
            <person name="Rechmann S."/>
            <person name="Borkova D."/>
            <person name="Bloecker H."/>
            <person name="Scharfe M."/>
            <person name="Grimm M."/>
            <person name="Loehnert T.-H."/>
            <person name="Dose S."/>
            <person name="de Haan M."/>
            <person name="Maarse A.C."/>
            <person name="Schaefer M."/>
            <person name="Mueller-Auer S."/>
            <person name="Gabel C."/>
            <person name="Fuchs M."/>
            <person name="Fartmann B."/>
            <person name="Granderath K."/>
            <person name="Dauner D."/>
            <person name="Herzl A."/>
            <person name="Neumann S."/>
            <person name="Argiriou A."/>
            <person name="Vitale D."/>
            <person name="Liguori R."/>
            <person name="Piravandi E."/>
            <person name="Massenet O."/>
            <person name="Quigley F."/>
            <person name="Clabauld G."/>
            <person name="Muendlein A."/>
            <person name="Felber R."/>
            <person name="Schnabl S."/>
            <person name="Hiller R."/>
            <person name="Schmidt W."/>
            <person name="Lecharny A."/>
            <person name="Aubourg S."/>
            <person name="Chefdor F."/>
            <person name="Cooke R."/>
            <person name="Berger C."/>
            <person name="Monfort A."/>
            <person name="Casacuberta E."/>
            <person name="Gibbons T."/>
            <person name="Weber N."/>
            <person name="Vandenbol M."/>
            <person name="Bargues M."/>
            <person name="Terol J."/>
            <person name="Torres A."/>
            <person name="Perez-Perez A."/>
            <person name="Purnelle B."/>
            <person name="Bent E."/>
            <person name="Johnson S."/>
            <person name="Tacon D."/>
            <person name="Jesse T."/>
            <person name="Heijnen L."/>
            <person name="Schwarz S."/>
            <person name="Scholler P."/>
            <person name="Heber S."/>
            <person name="Francs P."/>
            <person name="Bielke C."/>
            <person name="Frishman D."/>
            <person name="Haase D."/>
            <person name="Lemcke K."/>
            <person name="Mewes H.-W."/>
            <person name="Stocker S."/>
            <person name="Zaccaria P."/>
            <person name="Bevan M."/>
            <person name="Wilson R.K."/>
            <person name="de la Bastide M."/>
            <person name="Habermann K."/>
            <person name="Parnell L."/>
            <person name="Dedhia N."/>
            <person name="Gnoj L."/>
            <person name="Schutz K."/>
            <person name="Huang E."/>
            <person name="Spiegel L."/>
            <person name="Sekhon M."/>
            <person name="Murray J."/>
            <person name="Sheet P."/>
            <person name="Cordes M."/>
            <person name="Abu-Threideh J."/>
            <person name="Stoneking T."/>
            <person name="Kalicki J."/>
            <person name="Graves T."/>
            <person name="Harmon G."/>
            <person name="Edwards J."/>
            <person name="Latreille P."/>
            <person name="Courtney L."/>
            <person name="Cloud J."/>
            <person name="Abbott A."/>
            <person name="Scott K."/>
            <person name="Johnson D."/>
            <person name="Minx P."/>
            <person name="Bentley D."/>
            <person name="Fulton B."/>
            <person name="Miller N."/>
            <person name="Greco T."/>
            <person name="Kemp K."/>
            <person name="Kramer J."/>
            <person name="Fulton L."/>
            <person name="Mardis E."/>
            <person name="Dante M."/>
            <person name="Pepin K."/>
            <person name="Hillier L.W."/>
            <person name="Nelson J."/>
            <person name="Spieth J."/>
            <person name="Ryan E."/>
            <person name="Andrews S."/>
            <person name="Geisel C."/>
            <person name="Layman D."/>
            <person name="Du H."/>
            <person name="Ali J."/>
            <person name="Berghoff A."/>
            <person name="Jones K."/>
            <person name="Drone K."/>
            <person name="Cotton M."/>
            <person name="Joshu C."/>
            <person name="Antonoiu B."/>
            <person name="Zidanic M."/>
            <person name="Strong C."/>
            <person name="Sun H."/>
            <person name="Lamar B."/>
            <person name="Yordan C."/>
            <person name="Ma P."/>
            <person name="Zhong J."/>
            <person name="Preston R."/>
            <person name="Vil D."/>
            <person name="Shekher M."/>
            <person name="Matero A."/>
            <person name="Shah R."/>
            <person name="Swaby I.K."/>
            <person name="O'Shaughnessy A."/>
            <person name="Rodriguez M."/>
            <person name="Hoffman J."/>
            <person name="Till S."/>
            <person name="Granat S."/>
            <person name="Shohdy N."/>
            <person name="Hasegawa A."/>
            <person name="Hameed A."/>
            <person name="Lodhi M."/>
            <person name="Johnson A."/>
            <person name="Chen E."/>
            <person name="Marra M.A."/>
            <person name="Martienssen R."/>
            <person name="McCombie W.R."/>
        </authorList>
    </citation>
    <scope>NUCLEOTIDE SEQUENCE [LARGE SCALE GENOMIC DNA]</scope>
    <source>
        <strain>cv. Columbia</strain>
    </source>
</reference>
<reference key="4">
    <citation type="journal article" date="2017" name="Plant J.">
        <title>Araport11: a complete reannotation of the Arabidopsis thaliana reference genome.</title>
        <authorList>
            <person name="Cheng C.Y."/>
            <person name="Krishnakumar V."/>
            <person name="Chan A.P."/>
            <person name="Thibaud-Nissen F."/>
            <person name="Schobel S."/>
            <person name="Town C.D."/>
        </authorList>
    </citation>
    <scope>GENOME REANNOTATION</scope>
    <source>
        <strain>cv. Columbia</strain>
    </source>
</reference>
<reference key="5">
    <citation type="journal article" date="2002" name="Science">
        <title>Functional annotation of a full-length Arabidopsis cDNA collection.</title>
        <authorList>
            <person name="Seki M."/>
            <person name="Narusaka M."/>
            <person name="Kamiya A."/>
            <person name="Ishida J."/>
            <person name="Satou M."/>
            <person name="Sakurai T."/>
            <person name="Nakajima M."/>
            <person name="Enju A."/>
            <person name="Akiyama K."/>
            <person name="Oono Y."/>
            <person name="Muramatsu M."/>
            <person name="Hayashizaki Y."/>
            <person name="Kawai J."/>
            <person name="Carninci P."/>
            <person name="Itoh M."/>
            <person name="Ishii Y."/>
            <person name="Arakawa T."/>
            <person name="Shibata K."/>
            <person name="Shinagawa A."/>
            <person name="Shinozaki K."/>
        </authorList>
    </citation>
    <scope>NUCLEOTIDE SEQUENCE [LARGE SCALE MRNA] (ISOFORM 1)</scope>
    <source>
        <strain>cv. Columbia</strain>
    </source>
</reference>
<reference key="6">
    <citation type="journal article" date="2003" name="Science">
        <title>Empirical analysis of transcriptional activity in the Arabidopsis genome.</title>
        <authorList>
            <person name="Yamada K."/>
            <person name="Lim J."/>
            <person name="Dale J.M."/>
            <person name="Chen H."/>
            <person name="Shinn P."/>
            <person name="Palm C.J."/>
            <person name="Southwick A.M."/>
            <person name="Wu H.C."/>
            <person name="Kim C.J."/>
            <person name="Nguyen M."/>
            <person name="Pham P.K."/>
            <person name="Cheuk R.F."/>
            <person name="Karlin-Newmann G."/>
            <person name="Liu S.X."/>
            <person name="Lam B."/>
            <person name="Sakano H."/>
            <person name="Wu T."/>
            <person name="Yu G."/>
            <person name="Miranda M."/>
            <person name="Quach H.L."/>
            <person name="Tripp M."/>
            <person name="Chang C.H."/>
            <person name="Lee J.M."/>
            <person name="Toriumi M.J."/>
            <person name="Chan M.M."/>
            <person name="Tang C.C."/>
            <person name="Onodera C.S."/>
            <person name="Deng J.M."/>
            <person name="Akiyama K."/>
            <person name="Ansari Y."/>
            <person name="Arakawa T."/>
            <person name="Banh J."/>
            <person name="Banno F."/>
            <person name="Bowser L."/>
            <person name="Brooks S.Y."/>
            <person name="Carninci P."/>
            <person name="Chao Q."/>
            <person name="Choy N."/>
            <person name="Enju A."/>
            <person name="Goldsmith A.D."/>
            <person name="Gurjal M."/>
            <person name="Hansen N.F."/>
            <person name="Hayashizaki Y."/>
            <person name="Johnson-Hopson C."/>
            <person name="Hsuan V.W."/>
            <person name="Iida K."/>
            <person name="Karnes M."/>
            <person name="Khan S."/>
            <person name="Koesema E."/>
            <person name="Ishida J."/>
            <person name="Jiang P.X."/>
            <person name="Jones T."/>
            <person name="Kawai J."/>
            <person name="Kamiya A."/>
            <person name="Meyers C."/>
            <person name="Nakajima M."/>
            <person name="Narusaka M."/>
            <person name="Seki M."/>
            <person name="Sakurai T."/>
            <person name="Satou M."/>
            <person name="Tamse R."/>
            <person name="Vaysberg M."/>
            <person name="Wallender E.K."/>
            <person name="Wong C."/>
            <person name="Yamamura Y."/>
            <person name="Yuan S."/>
            <person name="Shinozaki K."/>
            <person name="Davis R.W."/>
            <person name="Theologis A."/>
            <person name="Ecker J.R."/>
        </authorList>
    </citation>
    <scope>NUCLEOTIDE SEQUENCE [LARGE SCALE MRNA] (ISOFORM 1)</scope>
    <source>
        <strain>cv. Columbia</strain>
    </source>
</reference>
<reference key="7">
    <citation type="journal article" date="2006" name="BMC Mol. Biol.">
        <title>AtMND1 is required for homologous pairing during meiosis in Arabidopsis.</title>
        <authorList>
            <person name="Panoli A.P."/>
            <person name="Ravi M."/>
            <person name="Sebastian J."/>
            <person name="Nishal B."/>
            <person name="Reddy T.V."/>
            <person name="Marimuthu M.P."/>
            <person name="Subbiah V."/>
            <person name="Vijaybhaskar V."/>
            <person name="Siddiqi I."/>
        </authorList>
    </citation>
    <scope>FUNCTION</scope>
    <scope>TISSUE SPECIFICITY</scope>
    <scope>DISRUPTION PHENOTYPE</scope>
</reference>
<reference key="8">
    <citation type="journal article" date="2007" name="PLoS Genet.">
        <title>The interplay of RecA-related proteins and the MND1-HOP2 complex during meiosis in Arabidopsis thaliana.</title>
        <authorList>
            <person name="Vignard J."/>
            <person name="Siwiec T."/>
            <person name="Chelysheva L."/>
            <person name="Vrielynck N."/>
            <person name="Gonord F."/>
            <person name="Armstrong S.J."/>
            <person name="Schloegelhofer P."/>
            <person name="Mercier R."/>
        </authorList>
    </citation>
    <scope>FUNCTION</scope>
    <scope>SUBCELLULAR LOCATION</scope>
    <scope>INTERACTION WITH HOP2; LIM15 AND RAD51</scope>
</reference>
<reference key="9">
    <citation type="journal article" date="2009" name="Plant J.">
        <title>A novel ATM dependant X-ray inducible gene is essential for both plant meiosis and gametogenesis.</title>
        <authorList>
            <person name="Dean P.J."/>
            <person name="Siwiec T."/>
            <person name="Waterworth W.M."/>
            <person name="Schloegelhofer P."/>
            <person name="Armstrong S.J."/>
            <person name="West C.E."/>
        </authorList>
    </citation>
    <scope>INTERACTION WITH MIP1</scope>
</reference>
<organism>
    <name type="scientific">Arabidopsis thaliana</name>
    <name type="common">Mouse-ear cress</name>
    <dbReference type="NCBI Taxonomy" id="3702"/>
    <lineage>
        <taxon>Eukaryota</taxon>
        <taxon>Viridiplantae</taxon>
        <taxon>Streptophyta</taxon>
        <taxon>Embryophyta</taxon>
        <taxon>Tracheophyta</taxon>
        <taxon>Spermatophyta</taxon>
        <taxon>Magnoliopsida</taxon>
        <taxon>eudicotyledons</taxon>
        <taxon>Gunneridae</taxon>
        <taxon>Pentapetalae</taxon>
        <taxon>rosids</taxon>
        <taxon>malvids</taxon>
        <taxon>Brassicales</taxon>
        <taxon>Brassicaceae</taxon>
        <taxon>Camelineae</taxon>
        <taxon>Arabidopsis</taxon>
    </lineage>
</organism>
<protein>
    <recommendedName>
        <fullName>Meiotic nuclear division protein 1 homolog</fullName>
        <shortName>AtMND1</shortName>
    </recommendedName>
    <alternativeName>
        <fullName>Meiotic nuclear division 1-like protein</fullName>
    </alternativeName>
</protein>
<comment type="function">
    <text evidence="2 3 4">Required for proper homologous chromosome pairing and efficient cross-over and intragenic recombination during meiosis. Stimulates both DMC1/LIM15- and RAD51-mediated homologous strand assimilation, which is required for the resolution of meiotic double-strand breaks.</text>
</comment>
<comment type="subunit">
    <text evidence="2 4 5">Interacts with HOP2, RAD51, LIM15 and MIP1.</text>
</comment>
<comment type="interaction">
    <interactant intactId="EBI-1554720">
        <id>Q8GYD2</id>
    </interactant>
    <interactant intactId="EBI-1100687">
        <id>Q9ZNV8</id>
        <label>AHP2</label>
    </interactant>
    <organismsDiffer>false</organismsDiffer>
    <experiments>2</experiments>
</comment>
<comment type="interaction">
    <interactant intactId="EBI-1554720">
        <id>Q8GYD2</id>
    </interactant>
    <interactant intactId="EBI-307715">
        <id>Q39009</id>
        <label>DMC1</label>
    </interactant>
    <organismsDiffer>false</organismsDiffer>
    <experiments>2</experiments>
</comment>
<comment type="interaction">
    <interactant intactId="EBI-1554720">
        <id>Q8GYD2</id>
    </interactant>
    <interactant intactId="EBI-2270543">
        <id>Q8RX22</id>
        <label>MIP1</label>
    </interactant>
    <organismsDiffer>false</organismsDiffer>
    <experiments>2</experiments>
</comment>
<comment type="interaction">
    <interactant intactId="EBI-1554720">
        <id>Q8GYD2</id>
    </interactant>
    <interactant intactId="EBI-307687">
        <id>P94102</id>
        <label>RAD51</label>
    </interactant>
    <organismsDiffer>false</organismsDiffer>
    <experiments>2</experiments>
</comment>
<comment type="subcellular location">
    <subcellularLocation>
        <location evidence="4">Nucleus</location>
    </subcellularLocation>
    <subcellularLocation>
        <location evidence="4">Nucleus</location>
        <location evidence="4">Nucleolus</location>
    </subcellularLocation>
    <text>Localized to chromatin during meiosis.</text>
</comment>
<comment type="alternative products">
    <event type="alternative splicing"/>
    <isoform>
        <id>Q8GYD2-1</id>
        <name>1</name>
        <sequence type="displayed"/>
    </isoform>
    <isoform>
        <id>Q8GYD2-2</id>
        <name>2</name>
        <sequence type="described" ref="VSP_037490"/>
    </isoform>
</comment>
<comment type="tissue specificity">
    <text evidence="3">Expressed in reproductive tissues.</text>
</comment>
<comment type="disruption phenotype">
    <text evidence="2 3">Female and male sterility due to production of defective gametes.</text>
</comment>
<comment type="similarity">
    <text evidence="6">Belongs to the MND1 family.</text>
</comment>
<comment type="sequence caution" evidence="6">
    <conflict type="erroneous gene model prediction">
        <sequence resource="EMBL-CDS" id="CAB43931"/>
    </conflict>
</comment>
<comment type="sequence caution" evidence="6">
    <conflict type="erroneous gene model prediction">
        <sequence resource="EMBL-CDS" id="CAB79675"/>
    </conflict>
</comment>